<proteinExistence type="inferred from homology"/>
<comment type="catalytic activity">
    <reaction>
        <text>a (3R)-3-hydroxyacyl-CoA + NADP(+) = a 3-oxoacyl-CoA + NADPH + H(+)</text>
        <dbReference type="Rhea" id="RHEA:22256"/>
        <dbReference type="ChEBI" id="CHEBI:15378"/>
        <dbReference type="ChEBI" id="CHEBI:57319"/>
        <dbReference type="ChEBI" id="CHEBI:57783"/>
        <dbReference type="ChEBI" id="CHEBI:58349"/>
        <dbReference type="ChEBI" id="CHEBI:90726"/>
        <dbReference type="EC" id="1.1.1.36"/>
    </reaction>
</comment>
<comment type="pathway">
    <text evidence="3">Biopolymer metabolism; poly-(R)-3-hydroxybutanoate biosynthesis.</text>
</comment>
<comment type="subcellular location">
    <subcellularLocation>
        <location>Cytoplasm</location>
    </subcellularLocation>
</comment>
<comment type="similarity">
    <text evidence="6">Belongs to the short-chain dehydrogenases/reductases (SDR) family.</text>
</comment>
<evidence type="ECO:0000250" key="1">
    <source>
        <dbReference type="UniProtKB" id="P14697"/>
    </source>
</evidence>
<evidence type="ECO:0000255" key="2">
    <source>
        <dbReference type="PROSITE-ProRule" id="PRU10001"/>
    </source>
</evidence>
<evidence type="ECO:0000269" key="3">
    <source>
    </source>
</evidence>
<evidence type="ECO:0000303" key="4">
    <source>
    </source>
</evidence>
<evidence type="ECO:0000303" key="5">
    <source>
    </source>
</evidence>
<evidence type="ECO:0000305" key="6"/>
<dbReference type="EC" id="1.1.1.36"/>
<dbReference type="PIR" id="S06998">
    <property type="entry name" value="S06998"/>
</dbReference>
<dbReference type="SMR" id="P23238"/>
<dbReference type="BioCyc" id="MetaCyc:MONOMER-13089"/>
<dbReference type="UniPathway" id="UPA00917"/>
<dbReference type="GO" id="GO:0005737">
    <property type="term" value="C:cytoplasm"/>
    <property type="evidence" value="ECO:0007669"/>
    <property type="project" value="UniProtKB-SubCell"/>
</dbReference>
<dbReference type="GO" id="GO:0018454">
    <property type="term" value="F:acetoacetyl-CoA reductase activity"/>
    <property type="evidence" value="ECO:0007669"/>
    <property type="project" value="UniProtKB-EC"/>
</dbReference>
<dbReference type="GO" id="GO:0006629">
    <property type="term" value="P:lipid metabolic process"/>
    <property type="evidence" value="ECO:0007669"/>
    <property type="project" value="UniProtKB-ARBA"/>
</dbReference>
<dbReference type="GO" id="GO:0032787">
    <property type="term" value="P:monocarboxylic acid metabolic process"/>
    <property type="evidence" value="ECO:0007669"/>
    <property type="project" value="UniProtKB-ARBA"/>
</dbReference>
<dbReference type="GO" id="GO:0042619">
    <property type="term" value="P:poly-hydroxybutyrate biosynthetic process"/>
    <property type="evidence" value="ECO:0007669"/>
    <property type="project" value="UniProtKB-KW"/>
</dbReference>
<dbReference type="CDD" id="cd05333">
    <property type="entry name" value="BKR_SDR_c"/>
    <property type="match status" value="1"/>
</dbReference>
<dbReference type="FunFam" id="3.40.50.720:FF:000173">
    <property type="entry name" value="3-oxoacyl-[acyl-carrier protein] reductase"/>
    <property type="match status" value="1"/>
</dbReference>
<dbReference type="Gene3D" id="3.40.50.720">
    <property type="entry name" value="NAD(P)-binding Rossmann-like Domain"/>
    <property type="match status" value="1"/>
</dbReference>
<dbReference type="InterPro" id="IPR011283">
    <property type="entry name" value="Acetoacetyl-CoA_reductase"/>
</dbReference>
<dbReference type="InterPro" id="IPR036291">
    <property type="entry name" value="NAD(P)-bd_dom_sf"/>
</dbReference>
<dbReference type="InterPro" id="IPR020904">
    <property type="entry name" value="Sc_DH/Rdtase_CS"/>
</dbReference>
<dbReference type="InterPro" id="IPR050259">
    <property type="entry name" value="SDR"/>
</dbReference>
<dbReference type="InterPro" id="IPR002347">
    <property type="entry name" value="SDR_fam"/>
</dbReference>
<dbReference type="NCBIfam" id="TIGR01829">
    <property type="entry name" value="AcAcCoA_reduct"/>
    <property type="match status" value="1"/>
</dbReference>
<dbReference type="NCBIfam" id="NF009464">
    <property type="entry name" value="PRK12824.1"/>
    <property type="match status" value="1"/>
</dbReference>
<dbReference type="NCBIfam" id="NF009466">
    <property type="entry name" value="PRK12826.1-2"/>
    <property type="match status" value="1"/>
</dbReference>
<dbReference type="PANTHER" id="PTHR42879">
    <property type="entry name" value="3-OXOACYL-(ACYL-CARRIER-PROTEIN) REDUCTASE"/>
    <property type="match status" value="1"/>
</dbReference>
<dbReference type="PANTHER" id="PTHR42879:SF2">
    <property type="entry name" value="3-OXOACYL-[ACYL-CARRIER-PROTEIN] REDUCTASE FABG"/>
    <property type="match status" value="1"/>
</dbReference>
<dbReference type="Pfam" id="PF13561">
    <property type="entry name" value="adh_short_C2"/>
    <property type="match status" value="1"/>
</dbReference>
<dbReference type="PRINTS" id="PR00081">
    <property type="entry name" value="GDHRDH"/>
</dbReference>
<dbReference type="PRINTS" id="PR00080">
    <property type="entry name" value="SDRFAMILY"/>
</dbReference>
<dbReference type="SMART" id="SM00822">
    <property type="entry name" value="PKS_KR"/>
    <property type="match status" value="1"/>
</dbReference>
<dbReference type="SUPFAM" id="SSF51735">
    <property type="entry name" value="NAD(P)-binding Rossmann-fold domains"/>
    <property type="match status" value="1"/>
</dbReference>
<dbReference type="PROSITE" id="PS00061">
    <property type="entry name" value="ADH_SHORT"/>
    <property type="match status" value="1"/>
</dbReference>
<protein>
    <recommendedName>
        <fullName>Acetoacetyl-CoA reductase</fullName>
        <ecNumber>1.1.1.36</ecNumber>
    </recommendedName>
</protein>
<reference key="1">
    <citation type="journal article" date="1989" name="Mol. Microbiol.">
        <title>Fine structural analysis of the Zoogloea ramigera phbA-phbB locus encoding beta-ketothiolase and acetoacetyl-CoA reductase: nucleotide sequence of phbB.</title>
        <authorList>
            <person name="Peoples O.P."/>
            <person name="Sinskey A.J."/>
        </authorList>
    </citation>
    <scope>NUCLEOTIDE SEQUENCE [GENOMIC DNA]</scope>
    <scope>PATHWAY</scope>
    <source>
        <strain>ATCC 19623 / DSM 287 / JCM 20728 / IAM 12669 / NBRC 102405 / NCIMB 10340 / NCTC 10482 / NRRL B-3303 / I-16-M</strain>
    </source>
</reference>
<reference key="2">
    <citation type="journal article" date="1988" name="Eur. J. Biochem.">
        <title>The NADPH-linked acetoacetyl-CoA reductase from Zoogloea ramigera. Characterization and mechanistic studies of the cloned enzyme over-produced in Escherichia coli.</title>
        <authorList>
            <person name="Ploux O."/>
            <person name="Masamune S."/>
            <person name="Walsh C.T."/>
        </authorList>
    </citation>
    <scope>NUCLEOTIDE SEQUENCE [GENOMIC DNA] OF 3-31</scope>
</reference>
<reference key="3">
    <citation type="journal article" date="1992" name="FEMS Microbiol. Rev.">
        <title>Molecular basis for biosynthesis and accumulation of polyhydroxyalkanoic acids in bacteria.</title>
        <authorList>
            <person name="Steinbuechel A."/>
            <person name="Hustede E."/>
            <person name="Liebergesell M."/>
            <person name="Pieper U."/>
            <person name="Timm A."/>
            <person name="Valentin H."/>
        </authorList>
    </citation>
    <scope>GENE NAME</scope>
</reference>
<gene>
    <name evidence="4" type="primary">phaB</name>
    <name evidence="5" type="synonym">phbB</name>
</gene>
<keyword id="KW-0963">Cytoplasm</keyword>
<keyword id="KW-0521">NADP</keyword>
<keyword id="KW-0560">Oxidoreductase</keyword>
<keyword id="KW-0583">PHB biosynthesis</keyword>
<sequence length="241" mass="25285">MSRVALVTGGSRGIGAAISIALKAAGYKVAASYAGNDDAAKPFKAETGIAVYKWDVSSYEACVEGIAKVEADLGPIDVLVNNAGITKDAMFHKMTPDQWNAVINTNLTGLFNMTHPVWSGMRDRSFGRIVNISSINGQKGQMGQANYSAAKAGDLGFTKALAQEGAAKGITVNAICPGYIGTEMVRAIPEKVLNERIIPQIPVGRLGEPDEIARIVVFLASDEAGFITGSTISANGGQFFV</sequence>
<accession>P23238</accession>
<name>PHAB_SHIZO</name>
<feature type="chain" id="PRO_0000054751" description="Acetoacetyl-CoA reductase">
    <location>
        <begin position="1"/>
        <end position="241"/>
    </location>
</feature>
<feature type="active site" description="Proton acceptor" evidence="2">
    <location>
        <position position="147"/>
    </location>
</feature>
<feature type="binding site" evidence="1">
    <location>
        <begin position="12"/>
        <end position="14"/>
    </location>
    <ligand>
        <name>NADP(+)</name>
        <dbReference type="ChEBI" id="CHEBI:58349"/>
    </ligand>
</feature>
<feature type="binding site" evidence="1">
    <location>
        <begin position="82"/>
        <end position="86"/>
    </location>
    <ligand>
        <name>NADP(+)</name>
        <dbReference type="ChEBI" id="CHEBI:58349"/>
    </ligand>
</feature>
<feature type="binding site" evidence="1">
    <location>
        <position position="88"/>
    </location>
    <ligand>
        <name>substrate</name>
    </ligand>
</feature>
<feature type="binding site" evidence="1">
    <location>
        <begin position="141"/>
        <end position="144"/>
    </location>
    <ligand>
        <name>substrate</name>
    </ligand>
</feature>
<feature type="binding site" evidence="1">
    <location>
        <begin position="177"/>
        <end position="180"/>
    </location>
    <ligand>
        <name>NADP(+)</name>
        <dbReference type="ChEBI" id="CHEBI:58349"/>
    </ligand>
</feature>
<feature type="binding site" evidence="1">
    <location>
        <begin position="178"/>
        <end position="179"/>
    </location>
    <ligand>
        <name>substrate</name>
    </ligand>
</feature>
<organism>
    <name type="scientific">Shinella zoogloeoides</name>
    <name type="common">Crabtreella saccharophila</name>
    <dbReference type="NCBI Taxonomy" id="352475"/>
    <lineage>
        <taxon>Bacteria</taxon>
        <taxon>Pseudomonadati</taxon>
        <taxon>Pseudomonadota</taxon>
        <taxon>Alphaproteobacteria</taxon>
        <taxon>Hyphomicrobiales</taxon>
        <taxon>Rhizobiaceae</taxon>
        <taxon>Shinella</taxon>
    </lineage>
</organism>